<organism>
    <name type="scientific">Burkholderia orbicola (strain MC0-3)</name>
    <dbReference type="NCBI Taxonomy" id="406425"/>
    <lineage>
        <taxon>Bacteria</taxon>
        <taxon>Pseudomonadati</taxon>
        <taxon>Pseudomonadota</taxon>
        <taxon>Betaproteobacteria</taxon>
        <taxon>Burkholderiales</taxon>
        <taxon>Burkholderiaceae</taxon>
        <taxon>Burkholderia</taxon>
        <taxon>Burkholderia cepacia complex</taxon>
        <taxon>Burkholderia orbicola</taxon>
    </lineage>
</organism>
<reference key="1">
    <citation type="submission" date="2008-02" db="EMBL/GenBank/DDBJ databases">
        <title>Complete sequence of chromosome 2 of Burkholderia cenocepacia MC0-3.</title>
        <authorList>
            <person name="Copeland A."/>
            <person name="Lucas S."/>
            <person name="Lapidus A."/>
            <person name="Barry K."/>
            <person name="Bruce D."/>
            <person name="Goodwin L."/>
            <person name="Glavina del Rio T."/>
            <person name="Dalin E."/>
            <person name="Tice H."/>
            <person name="Pitluck S."/>
            <person name="Chain P."/>
            <person name="Malfatti S."/>
            <person name="Shin M."/>
            <person name="Vergez L."/>
            <person name="Schmutz J."/>
            <person name="Larimer F."/>
            <person name="Land M."/>
            <person name="Hauser L."/>
            <person name="Kyrpides N."/>
            <person name="Mikhailova N."/>
            <person name="Tiedje J."/>
            <person name="Richardson P."/>
        </authorList>
    </citation>
    <scope>NUCLEOTIDE SEQUENCE [LARGE SCALE GENOMIC DNA]</scope>
    <source>
        <strain>MC0-3</strain>
    </source>
</reference>
<feature type="chain" id="PRO_1000119982" description="UPF0145 protein Bcenmc03_5217">
    <location>
        <begin position="1"/>
        <end position="120"/>
    </location>
</feature>
<proteinExistence type="inferred from homology"/>
<protein>
    <recommendedName>
        <fullName evidence="1">UPF0145 protein Bcenmc03_5217</fullName>
    </recommendedName>
</protein>
<name>Y5217_BURO0</name>
<dbReference type="EMBL" id="CP000959">
    <property type="protein sequence ID" value="ACA94346.1"/>
    <property type="molecule type" value="Genomic_DNA"/>
</dbReference>
<dbReference type="RefSeq" id="WP_012339546.1">
    <property type="nucleotide sequence ID" value="NC_010515.1"/>
</dbReference>
<dbReference type="SMR" id="B1K7A6"/>
<dbReference type="GeneID" id="83051904"/>
<dbReference type="KEGG" id="bcm:Bcenmc03_5217"/>
<dbReference type="HOGENOM" id="CLU_117144_1_1_4"/>
<dbReference type="Proteomes" id="UP000002169">
    <property type="component" value="Chromosome 2"/>
</dbReference>
<dbReference type="Gene3D" id="3.30.110.70">
    <property type="entry name" value="Hypothetical protein apc22750. Chain B"/>
    <property type="match status" value="1"/>
</dbReference>
<dbReference type="HAMAP" id="MF_00338">
    <property type="entry name" value="UPF0145"/>
    <property type="match status" value="1"/>
</dbReference>
<dbReference type="InterPro" id="IPR035439">
    <property type="entry name" value="UPF0145_dom_sf"/>
</dbReference>
<dbReference type="InterPro" id="IPR002765">
    <property type="entry name" value="UPF0145_YbjQ-like"/>
</dbReference>
<dbReference type="PANTHER" id="PTHR34068:SF2">
    <property type="entry name" value="UPF0145 PROTEIN SCO3412"/>
    <property type="match status" value="1"/>
</dbReference>
<dbReference type="PANTHER" id="PTHR34068">
    <property type="entry name" value="UPF0145 PROTEIN YBJQ"/>
    <property type="match status" value="1"/>
</dbReference>
<dbReference type="Pfam" id="PF01906">
    <property type="entry name" value="YbjQ_1"/>
    <property type="match status" value="1"/>
</dbReference>
<dbReference type="SUPFAM" id="SSF117782">
    <property type="entry name" value="YbjQ-like"/>
    <property type="match status" value="1"/>
</dbReference>
<evidence type="ECO:0000255" key="1">
    <source>
        <dbReference type="HAMAP-Rule" id="MF_00338"/>
    </source>
</evidence>
<sequence length="120" mass="12744">MTEPTRSIDDLSPARVTTAFDLPGHTTVRSLGVAQGIVVRSRSIVGSFGASLQTIFGGNITLYTSLCEKARQQAFDKMLADARKLGANAIVAMRYDSTEIGSGVTEVICYGTAVRVTQDA</sequence>
<comment type="similarity">
    <text evidence="1">Belongs to the UPF0145 family.</text>
</comment>
<accession>B1K7A6</accession>
<gene>
    <name type="ordered locus">Bcenmc03_5217</name>
</gene>